<name>ATP5I_RAT</name>
<comment type="function">
    <text evidence="1 2">Subunit e, of the mitochondrial membrane ATP synthase complex (F(1)F(0) ATP synthase or Complex V) that produces ATP from ADP in the presence of a proton gradient across the membrane which is generated by electron transport complexes of the respiratory chain. ATP synthase complex consist of a soluble F(1) head domain - the catalytic core - and a membrane F(1) domain - the membrane proton channel. These two domains are linked by a central stalk rotating inside the F(1) region and a stationary peripheral stalk. During catalysis, ATP synthesis in the catalytic domain of F(1) is coupled via a rotary mechanism of the central stalk subunits to proton translocation (By similarity). In vivo, can only synthesize ATP although its ATP hydrolase activity can be activated artificially in vitro (By similarity). Part of the complex F(0) domain (By similarity).</text>
</comment>
<comment type="subunit">
    <text evidence="2 6">Component of the ATP synthase complex composed at least of ATP5F1A/subunit alpha, ATP5F1B/subunit beta, ATP5MC1/subunit c (homooctomer), MT-ATP6/subunit a, MT-ATP8/subunit 8, ATP5ME/subunit e, ATP5MF/subunit f, ATP5MG/subunit g, ATP5MK/subunit k, ATP5MJ/subunit j, ATP5F1C/subunit gamma, ATP5F1D/subunit delta, ATP5F1E/subunit epsilon, ATP5PF/subunit F6, ATP5PB/subunit b, ATP5PD/subunit d, ATP5PO/subunit OSCP (PubMed:17575325). ATP synthase complex consists of a soluble F(1) head domain (subunits alpha(3) and beta(3)) - the catalytic core - and a membrane F(0) domain - the membrane proton channel (subunits c, a, 8, e, f, g, k and j). These two domains are linked by a central stalk (subunits gamma, delta, and epsilon) rotating inside the F1 region and a stationary peripheral stalk (subunits F6, b, d, and OSCP) (By similarity).</text>
</comment>
<comment type="subcellular location">
    <subcellularLocation>
        <location>Mitochondrion</location>
    </subcellularLocation>
    <subcellularLocation>
        <location>Mitochondrion inner membrane</location>
    </subcellularLocation>
</comment>
<comment type="similarity">
    <text evidence="7">Belongs to the ATPase e subunit family.</text>
</comment>
<protein>
    <recommendedName>
        <fullName evidence="7">ATP synthase F(0) complex subunit e, mitochondrial</fullName>
        <shortName>ATPase subunit e</shortName>
    </recommendedName>
    <alternativeName>
        <fullName evidence="7">ATP synthase membrane subunit e</fullName>
    </alternativeName>
</protein>
<evidence type="ECO:0000250" key="1">
    <source>
        <dbReference type="UniProtKB" id="P19483"/>
    </source>
</evidence>
<evidence type="ECO:0000250" key="2">
    <source>
        <dbReference type="UniProtKB" id="P56385"/>
    </source>
</evidence>
<evidence type="ECO:0000250" key="3">
    <source>
        <dbReference type="UniProtKB" id="Q06185"/>
    </source>
</evidence>
<evidence type="ECO:0000269" key="4">
    <source>
    </source>
</evidence>
<evidence type="ECO:0000269" key="5">
    <source>
    </source>
</evidence>
<evidence type="ECO:0000269" key="6">
    <source>
    </source>
</evidence>
<evidence type="ECO:0000305" key="7"/>
<evidence type="ECO:0000312" key="8">
    <source>
        <dbReference type="RGD" id="621377"/>
    </source>
</evidence>
<evidence type="ECO:0007744" key="9">
    <source>
    </source>
</evidence>
<sequence length="71" mass="8255">MVPPVQVSPLIKFGRYSALILGMAYGAKRYSYLKPRAEEERRIAAEEKKRLDELKRIERELAEAEDVSIFK</sequence>
<dbReference type="EMBL" id="D13121">
    <property type="protein sequence ID" value="BAA02423.1"/>
    <property type="molecule type" value="mRNA"/>
</dbReference>
<dbReference type="EMBL" id="BC058449">
    <property type="protein sequence ID" value="AAH58449.1"/>
    <property type="molecule type" value="mRNA"/>
</dbReference>
<dbReference type="PIR" id="A44246">
    <property type="entry name" value="A44246"/>
</dbReference>
<dbReference type="RefSeq" id="NP_536729.1">
    <property type="nucleotide sequence ID" value="NM_080481.1"/>
</dbReference>
<dbReference type="SMR" id="P29419"/>
<dbReference type="BioGRID" id="250811">
    <property type="interactions" value="2"/>
</dbReference>
<dbReference type="CORUM" id="P29419"/>
<dbReference type="FunCoup" id="P29419">
    <property type="interactions" value="1399"/>
</dbReference>
<dbReference type="IntAct" id="P29419">
    <property type="interactions" value="2"/>
</dbReference>
<dbReference type="MINT" id="P29419"/>
<dbReference type="STRING" id="10116.ENSRNOP00000000072"/>
<dbReference type="GlyGen" id="P29419">
    <property type="glycosylation" value="2 sites, 1 O-linked glycan (2 sites)"/>
</dbReference>
<dbReference type="iPTMnet" id="P29419"/>
<dbReference type="PhosphoSitePlus" id="P29419"/>
<dbReference type="SwissPalm" id="P29419"/>
<dbReference type="jPOST" id="P29419"/>
<dbReference type="PaxDb" id="10116-ENSRNOP00000000072"/>
<dbReference type="GeneID" id="140608"/>
<dbReference type="KEGG" id="rno:140608"/>
<dbReference type="UCSC" id="RGD:621377">
    <property type="organism name" value="rat"/>
</dbReference>
<dbReference type="AGR" id="RGD:621377"/>
<dbReference type="CTD" id="521"/>
<dbReference type="RGD" id="621377">
    <property type="gene designation" value="Atp5me"/>
</dbReference>
<dbReference type="VEuPathDB" id="HostDB:ENSRNOG00000000064"/>
<dbReference type="eggNOG" id="KOG4326">
    <property type="taxonomic scope" value="Eukaryota"/>
</dbReference>
<dbReference type="HOGENOM" id="CLU_180903_0_0_1"/>
<dbReference type="InParanoid" id="P29419"/>
<dbReference type="OrthoDB" id="83510at9989"/>
<dbReference type="PhylomeDB" id="P29419"/>
<dbReference type="TreeFam" id="TF314719"/>
<dbReference type="Reactome" id="R-RNO-163210">
    <property type="pathway name" value="Formation of ATP by chemiosmotic coupling"/>
</dbReference>
<dbReference type="Reactome" id="R-RNO-8949613">
    <property type="pathway name" value="Cristae formation"/>
</dbReference>
<dbReference type="PRO" id="PR:P29419"/>
<dbReference type="Proteomes" id="UP000002494">
    <property type="component" value="Chromosome 14"/>
</dbReference>
<dbReference type="Bgee" id="ENSRNOG00000000064">
    <property type="expression patterns" value="Expressed in quadriceps femoris and 20 other cell types or tissues"/>
</dbReference>
<dbReference type="GO" id="GO:0005743">
    <property type="term" value="C:mitochondrial inner membrane"/>
    <property type="evidence" value="ECO:0007669"/>
    <property type="project" value="UniProtKB-SubCell"/>
</dbReference>
<dbReference type="GO" id="GO:0045259">
    <property type="term" value="C:proton-transporting ATP synthase complex"/>
    <property type="evidence" value="ECO:0000314"/>
    <property type="project" value="UniProtKB"/>
</dbReference>
<dbReference type="GO" id="GO:0044877">
    <property type="term" value="F:protein-containing complex binding"/>
    <property type="evidence" value="ECO:0000314"/>
    <property type="project" value="RGD"/>
</dbReference>
<dbReference type="GO" id="GO:0046933">
    <property type="term" value="F:proton-transporting ATP synthase activity, rotational mechanism"/>
    <property type="evidence" value="ECO:0007669"/>
    <property type="project" value="Ensembl"/>
</dbReference>
<dbReference type="GO" id="GO:0042776">
    <property type="term" value="P:proton motive force-driven mitochondrial ATP synthesis"/>
    <property type="evidence" value="ECO:0000266"/>
    <property type="project" value="RGD"/>
</dbReference>
<dbReference type="InterPro" id="IPR008386">
    <property type="entry name" value="ATP_synth_F0_esu_mt"/>
</dbReference>
<dbReference type="PANTHER" id="PTHR12427">
    <property type="entry name" value="ATP SYNTHASE E CHAIN, MITOCHONDRIAL"/>
    <property type="match status" value="1"/>
</dbReference>
<dbReference type="PANTHER" id="PTHR12427:SF1">
    <property type="entry name" value="ATP SYNTHASE SUBUNIT E, MITOCHONDRIAL"/>
    <property type="match status" value="1"/>
</dbReference>
<dbReference type="Pfam" id="PF05680">
    <property type="entry name" value="ATP-synt_E"/>
    <property type="match status" value="1"/>
</dbReference>
<organism>
    <name type="scientific">Rattus norvegicus</name>
    <name type="common">Rat</name>
    <dbReference type="NCBI Taxonomy" id="10116"/>
    <lineage>
        <taxon>Eukaryota</taxon>
        <taxon>Metazoa</taxon>
        <taxon>Chordata</taxon>
        <taxon>Craniata</taxon>
        <taxon>Vertebrata</taxon>
        <taxon>Euteleostomi</taxon>
        <taxon>Mammalia</taxon>
        <taxon>Eutheria</taxon>
        <taxon>Euarchontoglires</taxon>
        <taxon>Glires</taxon>
        <taxon>Rodentia</taxon>
        <taxon>Myomorpha</taxon>
        <taxon>Muroidea</taxon>
        <taxon>Muridae</taxon>
        <taxon>Murinae</taxon>
        <taxon>Rattus</taxon>
    </lineage>
</organism>
<keyword id="KW-0007">Acetylation</keyword>
<keyword id="KW-0066">ATP synthesis</keyword>
<keyword id="KW-0138">CF(0)</keyword>
<keyword id="KW-0903">Direct protein sequencing</keyword>
<keyword id="KW-0375">Hydrogen ion transport</keyword>
<keyword id="KW-0406">Ion transport</keyword>
<keyword id="KW-0472">Membrane</keyword>
<keyword id="KW-0496">Mitochondrion</keyword>
<keyword id="KW-0999">Mitochondrion inner membrane</keyword>
<keyword id="KW-0597">Phosphoprotein</keyword>
<keyword id="KW-1185">Reference proteome</keyword>
<keyword id="KW-0813">Transport</keyword>
<proteinExistence type="evidence at protein level"/>
<reference key="1">
    <citation type="journal article" date="1992" name="Biochemistry">
        <title>Complete amino acid sequence of subunit e of rat liver mitochondrial H(+)-ATP synthase.</title>
        <authorList>
            <person name="Higuti T."/>
            <person name="Kuroiwa K."/>
            <person name="Kawamura Y."/>
            <person name="Yoshihara Y."/>
        </authorList>
    </citation>
    <scope>NUCLEOTIDE SEQUENCE [MRNA]</scope>
    <scope>PROTEIN SEQUENCE OF 2-71</scope>
    <source>
        <tissue>Liver</tissue>
    </source>
</reference>
<reference key="2">
    <citation type="journal article" date="2004" name="Genome Res.">
        <title>The status, quality, and expansion of the NIH full-length cDNA project: the Mammalian Gene Collection (MGC).</title>
        <authorList>
            <consortium name="The MGC Project Team"/>
        </authorList>
    </citation>
    <scope>NUCLEOTIDE SEQUENCE [LARGE SCALE MRNA]</scope>
    <source>
        <tissue>Pituitary</tissue>
    </source>
</reference>
<reference key="3">
    <citation type="journal article" date="1992" name="J. Biol. Chem.">
        <title>A simple, rapid method for purification of epsilon-subunit, coupling factor 6, subunit d, and subunit e from rat liver H(+)-ATP synthase and determination of the complete amino acid sequence of epsilon-subunit.</title>
        <authorList>
            <person name="Higuti T."/>
            <person name="Yoshihara Y."/>
            <person name="Kuroiwa K."/>
            <person name="Kawamura Y."/>
            <person name="Toda H."/>
            <person name="Sakiyama F."/>
        </authorList>
    </citation>
    <scope>PROTEIN SEQUENCE OF 2-45</scope>
    <source>
        <tissue>Liver</tissue>
    </source>
</reference>
<reference key="4">
    <citation type="submission" date="2007-04" db="UniProtKB">
        <authorList>
            <person name="Lubec G."/>
            <person name="Diao W."/>
        </authorList>
    </citation>
    <scope>PROTEIN SEQUENCE OF 16-28 AND 60-71</scope>
    <scope>IDENTIFICATION BY MASS SPECTROMETRY</scope>
    <source>
        <strain>Sprague-Dawley</strain>
        <tissue>Hippocampus</tissue>
    </source>
</reference>
<reference key="5">
    <citation type="journal article" date="2007" name="Mol. Cell. Proteomics">
        <title>Identification of two proteins associated with mammalian ATP synthase.</title>
        <authorList>
            <person name="Meyer B."/>
            <person name="Wittig I."/>
            <person name="Trifilieff E."/>
            <person name="Karas M."/>
            <person name="Schaegger H."/>
        </authorList>
    </citation>
    <scope>IDENTIFICATION BY MASS SPECTROMETRY</scope>
    <scope>IDENTIFICATION IN THE ATP SYNTHASE COMPLEX</scope>
</reference>
<reference key="6">
    <citation type="journal article" date="2012" name="Nat. Commun.">
        <title>Quantitative maps of protein phosphorylation sites across 14 different rat organs and tissues.</title>
        <authorList>
            <person name="Lundby A."/>
            <person name="Secher A."/>
            <person name="Lage K."/>
            <person name="Nordsborg N.B."/>
            <person name="Dmytriyev A."/>
            <person name="Lundby C."/>
            <person name="Olsen J.V."/>
        </authorList>
    </citation>
    <scope>PHOSPHORYLATION [LARGE SCALE ANALYSIS] AT SER-68</scope>
    <scope>IDENTIFICATION BY MASS SPECTROMETRY [LARGE SCALE ANALYSIS]</scope>
</reference>
<feature type="initiator methionine" description="Removed" evidence="4 5">
    <location>
        <position position="1"/>
    </location>
</feature>
<feature type="chain" id="PRO_0000071688" description="ATP synthase F(0) complex subunit e, mitochondrial">
    <location>
        <begin position="2"/>
        <end position="71"/>
    </location>
</feature>
<feature type="modified residue" description="N6-acetyllysine" evidence="3">
    <location>
        <position position="34"/>
    </location>
</feature>
<feature type="modified residue" description="Phosphoserine" evidence="9">
    <location>
        <position position="68"/>
    </location>
</feature>
<gene>
    <name evidence="8" type="primary">Atp5me</name>
    <name type="synonym">Atp5i</name>
</gene>
<accession>P29419</accession>